<keyword id="KW-0002">3D-structure</keyword>
<keyword id="KW-0012">Acyltransferase</keyword>
<keyword id="KW-0903">Direct protein sequencing</keyword>
<keyword id="KW-0450">Lipoyl</keyword>
<keyword id="KW-0808">Transferase</keyword>
<accession>P11961</accession>
<evidence type="ECO:0000255" key="1"/>
<evidence type="ECO:0000255" key="2">
    <source>
        <dbReference type="PROSITE-ProRule" id="PRU01066"/>
    </source>
</evidence>
<evidence type="ECO:0000255" key="3">
    <source>
        <dbReference type="PROSITE-ProRule" id="PRU01170"/>
    </source>
</evidence>
<evidence type="ECO:0000256" key="4">
    <source>
        <dbReference type="SAM" id="MobiDB-lite"/>
    </source>
</evidence>
<evidence type="ECO:0000269" key="5">
    <source>
    </source>
</evidence>
<evidence type="ECO:0000269" key="6">
    <source>
    </source>
</evidence>
<evidence type="ECO:0000305" key="7"/>
<evidence type="ECO:0007829" key="8">
    <source>
        <dbReference type="PDB" id="1LAB"/>
    </source>
</evidence>
<evidence type="ECO:0007829" key="9">
    <source>
        <dbReference type="PDB" id="1W85"/>
    </source>
</evidence>
<gene>
    <name type="primary">pdhC</name>
</gene>
<sequence length="428" mass="46326">MAFEFKLPDIGEGIHEGEIVKWFVKPGDEVNEDDVLCEVQNDKAVVEIPSPVKGKVLEILVPEGTVATVGQTLITLDAPGYENMTFKGQEQEEAKKEEKTETVSKEEKVDAVAPNAPAAEAEAGPNRRVIAMPSVRKYAREKGVDIRLVQGTGKNGRVLKEDIDAFLAGGAKPAPAAAEEKAAPAAAKPATTEGEFPETREKMSGIRRAIAKAMVHSKHTAPHVTLMDEADVTKLVAHRKKFKAIAAEKGIKLTFLPYVVKALVSALREYPVLNTSIDDETEEIIQKHYYNIGIAADTDRGLLVPVIKHADRKPIFALAQEINELAEKARDGKLTPGEMKGASCTITNIGSAGGQWFTPVINHPEVAILGIGRIAEKPIVRDGEIVAAPMLALSLSFDHRMIDGATAQKALNHIKRLLSDPELLLMEA</sequence>
<comment type="function">
    <text>The pyruvate dehydrogenase complex catalyzes the overall conversion of pyruvate to acetyl-CoA and CO(2). It contains multiple copies of three enzymatic components: pyruvate dehydrogenase (E1), dihydrolipoamide acetyltransferase (E2) and lipoamide dehydrogenase (E3).</text>
</comment>
<comment type="catalytic activity">
    <reaction>
        <text>N(6)-[(R)-dihydrolipoyl]-L-lysyl-[protein] + acetyl-CoA = N(6)-[(R)-S(8)-acetyldihydrolipoyl]-L-lysyl-[protein] + CoA</text>
        <dbReference type="Rhea" id="RHEA:17017"/>
        <dbReference type="Rhea" id="RHEA-COMP:10475"/>
        <dbReference type="Rhea" id="RHEA-COMP:10478"/>
        <dbReference type="ChEBI" id="CHEBI:57287"/>
        <dbReference type="ChEBI" id="CHEBI:57288"/>
        <dbReference type="ChEBI" id="CHEBI:83100"/>
        <dbReference type="ChEBI" id="CHEBI:83111"/>
        <dbReference type="EC" id="2.3.1.12"/>
    </reaction>
</comment>
<comment type="cofactor">
    <cofactor>
        <name>(R)-lipoate</name>
        <dbReference type="ChEBI" id="CHEBI:83088"/>
    </cofactor>
    <text>Binds 1 lipoyl cofactor covalently.</text>
</comment>
<comment type="subunit">
    <text>Forms a 60-polypeptide structural core with icosahedral symmetry.</text>
</comment>
<comment type="interaction">
    <interactant intactId="EBI-1040691">
        <id>P11961</id>
    </interactant>
    <interactant intactId="EBI-9021392">
        <id>P11959</id>
        <label>pdhD</label>
    </interactant>
    <organismsDiffer>false</organismsDiffer>
    <experiments>3</experiments>
</comment>
<comment type="similarity">
    <text evidence="7">Belongs to the 2-oxoacid dehydrogenase family.</text>
</comment>
<protein>
    <recommendedName>
        <fullName>Dihydrolipoyllysine-residue acetyltransferase component of pyruvate dehydrogenase complex</fullName>
        <ecNumber>2.3.1.12</ecNumber>
    </recommendedName>
    <alternativeName>
        <fullName>Dihydrolipoamide acetyltransferase component of pyruvate dehydrogenase complex</fullName>
    </alternativeName>
    <alternativeName>
        <fullName>E2</fullName>
    </alternativeName>
</protein>
<proteinExistence type="evidence at protein level"/>
<name>ODP2_GEOSE</name>
<reference key="1">
    <citation type="journal article" date="1990" name="Eur. J. Biochem.">
        <title>Cloning and sequence analysis of the genes encoding the alpha and beta subunits of the E1 component of the pyruvate dehydrogenase multienzyme complex of Bacillus stearothermophilus.</title>
        <authorList>
            <person name="Hawkins C.F."/>
            <person name="Borges A."/>
            <person name="Perham R.N."/>
        </authorList>
    </citation>
    <scope>NUCLEOTIDE SEQUENCE [GENOMIC DNA]</scope>
    <source>
        <strain>ATCC 29609 / DSM 2027 / NCA 1503 / NCIMB 8924</strain>
    </source>
</reference>
<reference key="2">
    <citation type="journal article" date="1988" name="Biochem. J.">
        <title>Amino acid sequence analysis of the lipoyl and peripheral subunit-binding domains in the lipoate acetyltransferase component of the pyruvate dehydrogenase complex from Bacillus stearothermophilus.</title>
        <authorList>
            <person name="Packman L.C."/>
            <person name="Borges A."/>
            <person name="Perham R.N."/>
        </authorList>
    </citation>
    <scope>PROTEIN SEQUENCE OF 2-201</scope>
</reference>
<reference key="3">
    <citation type="journal article" date="1991" name="Eur. J. Biochem.">
        <title>Sequence-specific 1H-NMR assignments and secondary structure of the lipoyl domain of the Bacillus stearothermophilus pyruvate dehydrogenase multienzyme complex.</title>
        <authorList>
            <person name="Dardel F."/>
            <person name="Laue E.D."/>
            <person name="Perham R.N."/>
        </authorList>
    </citation>
    <scope>STRUCTURE BY NMR OF 1-86</scope>
</reference>
<reference key="4">
    <citation type="journal article" date="1993" name="J. Mol. Biol.">
        <title>Three-dimensional structure of the lipoyl domain from Bacillus stearothermophilus pyruvate dehydrogenase multienzyme complex.</title>
        <authorList>
            <person name="Dardel F."/>
            <person name="Davis A.L."/>
            <person name="Laue E.D."/>
            <person name="Perham R.N."/>
        </authorList>
    </citation>
    <scope>STRUCTURE BY NMR OF 1-86</scope>
    <scope>LIPOYLATION AT LYS-43</scope>
</reference>
<reference key="5">
    <citation type="journal article" date="1993" name="J. Mol. Biol.">
        <title>The high-resolution structure of the peripheral subunit-binding domain of dihydrolipoamide acetyltransferase from the pyruvate dehydrogenase multienzyme complex of Bacillus stearothermophilus.</title>
        <authorList>
            <person name="Kalia Y.N."/>
            <person name="Brocklehurst S.M."/>
            <person name="Hipps D.S."/>
            <person name="Appella E."/>
            <person name="Sakaguchi K."/>
            <person name="Perham R.N."/>
        </authorList>
    </citation>
    <scope>STRUCTURE BY NMR OF 129-171</scope>
</reference>
<reference key="6">
    <citation type="journal article" date="1996" name="Structure">
        <title>Protein-protein interactions in the pyruvate dehydrogenase multienzyme complex: dihydrolipoamide dehydrogenase complexed with the binding domain of dihydrolipoamide acetyltransferase.</title>
        <authorList>
            <person name="Mande S.S."/>
            <person name="Sarfaty S."/>
            <person name="Allen M.D."/>
            <person name="Perham R.N."/>
            <person name="Hol W.G.J."/>
        </authorList>
    </citation>
    <scope>X-RAY CRYSTALLOGRAPHY (2.6 ANGSTROMS) OF 129-171</scope>
</reference>
<organism>
    <name type="scientific">Geobacillus stearothermophilus</name>
    <name type="common">Bacillus stearothermophilus</name>
    <dbReference type="NCBI Taxonomy" id="1422"/>
    <lineage>
        <taxon>Bacteria</taxon>
        <taxon>Bacillati</taxon>
        <taxon>Bacillota</taxon>
        <taxon>Bacilli</taxon>
        <taxon>Bacillales</taxon>
        <taxon>Anoxybacillaceae</taxon>
        <taxon>Geobacillus</taxon>
    </lineage>
</organism>
<feature type="initiator methionine" description="Removed" evidence="5">
    <location>
        <position position="1"/>
    </location>
</feature>
<feature type="chain" id="PRO_0000162273" description="Dihydrolipoyllysine-residue acetyltransferase component of pyruvate dehydrogenase complex">
    <location>
        <begin position="2"/>
        <end position="428"/>
    </location>
</feature>
<feature type="domain" description="Lipoyl-binding" evidence="2">
    <location>
        <begin position="2"/>
        <end position="77"/>
    </location>
</feature>
<feature type="domain" description="Peripheral subunit-binding (PSBD)" evidence="3">
    <location>
        <begin position="130"/>
        <end position="167"/>
    </location>
</feature>
<feature type="region of interest" description="Disordered" evidence="4">
    <location>
        <begin position="88"/>
        <end position="123"/>
    </location>
</feature>
<feature type="region of interest" description="Disordered" evidence="4">
    <location>
        <begin position="177"/>
        <end position="201"/>
    </location>
</feature>
<feature type="compositionally biased region" description="Basic and acidic residues" evidence="4">
    <location>
        <begin position="89"/>
        <end position="110"/>
    </location>
</feature>
<feature type="compositionally biased region" description="Low complexity" evidence="4">
    <location>
        <begin position="111"/>
        <end position="123"/>
    </location>
</feature>
<feature type="compositionally biased region" description="Low complexity" evidence="4">
    <location>
        <begin position="177"/>
        <end position="194"/>
    </location>
</feature>
<feature type="active site" evidence="1">
    <location>
        <position position="399"/>
    </location>
</feature>
<feature type="modified residue" description="N6-lipoyllysine" evidence="2 6">
    <location>
        <position position="43"/>
    </location>
</feature>
<feature type="strand" evidence="8">
    <location>
        <begin position="10"/>
        <end position="12"/>
    </location>
</feature>
<feature type="strand" evidence="8">
    <location>
        <begin position="16"/>
        <end position="21"/>
    </location>
</feature>
<feature type="strand" evidence="8">
    <location>
        <begin position="37"/>
        <end position="40"/>
    </location>
</feature>
<feature type="strand" evidence="8">
    <location>
        <begin position="45"/>
        <end position="48"/>
    </location>
</feature>
<feature type="strand" evidence="8">
    <location>
        <begin position="59"/>
        <end position="61"/>
    </location>
</feature>
<feature type="strand" evidence="8">
    <location>
        <begin position="63"/>
        <end position="67"/>
    </location>
</feature>
<feature type="strand" evidence="8">
    <location>
        <begin position="69"/>
        <end position="71"/>
    </location>
</feature>
<feature type="helix" evidence="9">
    <location>
        <begin position="133"/>
        <end position="141"/>
    </location>
</feature>
<feature type="turn" evidence="9">
    <location>
        <begin position="146"/>
        <end position="148"/>
    </location>
</feature>
<feature type="helix" evidence="9">
    <location>
        <begin position="154"/>
        <end position="156"/>
    </location>
</feature>
<feature type="helix" evidence="9">
    <location>
        <begin position="160"/>
        <end position="167"/>
    </location>
</feature>
<dbReference type="EC" id="2.3.1.12"/>
<dbReference type="EMBL" id="X53560">
    <property type="protein sequence ID" value="CAA37630.1"/>
    <property type="molecule type" value="Genomic_DNA"/>
</dbReference>
<dbReference type="PIR" id="S10799">
    <property type="entry name" value="S14426"/>
</dbReference>
<dbReference type="RefSeq" id="WP_033016211.1">
    <property type="nucleotide sequence ID" value="NZ_RCTK01000001.1"/>
</dbReference>
<dbReference type="PDB" id="1B5S">
    <property type="method" value="X-ray"/>
    <property type="resolution" value="4.40 A"/>
    <property type="chains" value="A/B/C/D/E=185-426"/>
</dbReference>
<dbReference type="PDB" id="1EBD">
    <property type="method" value="X-ray"/>
    <property type="resolution" value="2.60 A"/>
    <property type="chains" value="C=130-170"/>
</dbReference>
<dbReference type="PDB" id="1LAB">
    <property type="method" value="NMR"/>
    <property type="chains" value="A=2-81"/>
</dbReference>
<dbReference type="PDB" id="1LAC">
    <property type="method" value="NMR"/>
    <property type="chains" value="A=2-81"/>
</dbReference>
<dbReference type="PDB" id="1W3D">
    <property type="method" value="NMR"/>
    <property type="chains" value="A=119-171"/>
</dbReference>
<dbReference type="PDB" id="1W4E">
    <property type="method" value="NMR"/>
    <property type="chains" value="A=126-170"/>
</dbReference>
<dbReference type="PDB" id="1W4F">
    <property type="method" value="NMR"/>
    <property type="chains" value="A=126-170"/>
</dbReference>
<dbReference type="PDB" id="1W4G">
    <property type="method" value="NMR"/>
    <property type="chains" value="A=126-170"/>
</dbReference>
<dbReference type="PDB" id="1W85">
    <property type="method" value="X-ray"/>
    <property type="resolution" value="2.00 A"/>
    <property type="chains" value="I/J=123-171"/>
</dbReference>
<dbReference type="PDB" id="1W88">
    <property type="method" value="X-ray"/>
    <property type="resolution" value="2.30 A"/>
    <property type="chains" value="I/J=123-171"/>
</dbReference>
<dbReference type="PDB" id="2PDD">
    <property type="method" value="NMR"/>
    <property type="chains" value="A=129-171"/>
</dbReference>
<dbReference type="PDB" id="2PDE">
    <property type="method" value="NMR"/>
    <property type="chains" value="A=129-171"/>
</dbReference>
<dbReference type="PDB" id="3DUF">
    <property type="method" value="X-ray"/>
    <property type="resolution" value="2.50 A"/>
    <property type="chains" value="I/J=1-428"/>
</dbReference>
<dbReference type="PDB" id="3DV0">
    <property type="method" value="X-ray"/>
    <property type="resolution" value="2.50 A"/>
    <property type="chains" value="I/J=1-428"/>
</dbReference>
<dbReference type="PDB" id="3DVA">
    <property type="method" value="X-ray"/>
    <property type="resolution" value="2.35 A"/>
    <property type="chains" value="I/J=1-428"/>
</dbReference>
<dbReference type="PDBsum" id="1B5S"/>
<dbReference type="PDBsum" id="1EBD"/>
<dbReference type="PDBsum" id="1LAB"/>
<dbReference type="PDBsum" id="1LAC"/>
<dbReference type="PDBsum" id="1W3D"/>
<dbReference type="PDBsum" id="1W4E"/>
<dbReference type="PDBsum" id="1W4F"/>
<dbReference type="PDBsum" id="1W4G"/>
<dbReference type="PDBsum" id="1W85"/>
<dbReference type="PDBsum" id="1W88"/>
<dbReference type="PDBsum" id="2PDD"/>
<dbReference type="PDBsum" id="2PDE"/>
<dbReference type="PDBsum" id="3DUF"/>
<dbReference type="PDBsum" id="3DV0"/>
<dbReference type="PDBsum" id="3DVA"/>
<dbReference type="BMRB" id="P11961"/>
<dbReference type="SMR" id="P11961"/>
<dbReference type="DIP" id="DIP-6156N"/>
<dbReference type="IntAct" id="P11961">
    <property type="interactions" value="3"/>
</dbReference>
<dbReference type="OrthoDB" id="9805770at2"/>
<dbReference type="BRENDA" id="2.3.1.12">
    <property type="organism ID" value="623"/>
</dbReference>
<dbReference type="EvolutionaryTrace" id="P11961"/>
<dbReference type="GO" id="GO:0005737">
    <property type="term" value="C:cytoplasm"/>
    <property type="evidence" value="ECO:0007669"/>
    <property type="project" value="TreeGrafter"/>
</dbReference>
<dbReference type="GO" id="GO:0004742">
    <property type="term" value="F:dihydrolipoyllysine-residue acetyltransferase activity"/>
    <property type="evidence" value="ECO:0007669"/>
    <property type="project" value="UniProtKB-EC"/>
</dbReference>
<dbReference type="GO" id="GO:0031405">
    <property type="term" value="F:lipoic acid binding"/>
    <property type="evidence" value="ECO:0007669"/>
    <property type="project" value="TreeGrafter"/>
</dbReference>
<dbReference type="CDD" id="cd06849">
    <property type="entry name" value="lipoyl_domain"/>
    <property type="match status" value="1"/>
</dbReference>
<dbReference type="FunFam" id="2.40.50.100:FF:000055">
    <property type="entry name" value="Dihydrolipoamide acetyltransferase component of pyruvate dehydrogenase complex"/>
    <property type="match status" value="1"/>
</dbReference>
<dbReference type="FunFam" id="3.30.559.10:FF:000007">
    <property type="entry name" value="Dihydrolipoamide acetyltransferase component of pyruvate dehydrogenase complex"/>
    <property type="match status" value="1"/>
</dbReference>
<dbReference type="FunFam" id="4.10.320.10:FF:000011">
    <property type="entry name" value="Dihydrolipoamide acetyltransferase component of pyruvate dehydrogenase complex"/>
    <property type="match status" value="1"/>
</dbReference>
<dbReference type="Gene3D" id="2.40.50.100">
    <property type="match status" value="1"/>
</dbReference>
<dbReference type="Gene3D" id="3.30.559.10">
    <property type="entry name" value="Chloramphenicol acetyltransferase-like domain"/>
    <property type="match status" value="1"/>
</dbReference>
<dbReference type="Gene3D" id="4.10.320.10">
    <property type="entry name" value="E3-binding domain"/>
    <property type="match status" value="1"/>
</dbReference>
<dbReference type="InterPro" id="IPR003016">
    <property type="entry name" value="2-oxoA_DH_lipoyl-BS"/>
</dbReference>
<dbReference type="InterPro" id="IPR001078">
    <property type="entry name" value="2-oxoacid_DH_actylTfrase"/>
</dbReference>
<dbReference type="InterPro" id="IPR050743">
    <property type="entry name" value="2-oxoacid_DH_E2_comp"/>
</dbReference>
<dbReference type="InterPro" id="IPR000089">
    <property type="entry name" value="Biotin_lipoyl"/>
</dbReference>
<dbReference type="InterPro" id="IPR023213">
    <property type="entry name" value="CAT-like_dom_sf"/>
</dbReference>
<dbReference type="InterPro" id="IPR036625">
    <property type="entry name" value="E3-bd_dom_sf"/>
</dbReference>
<dbReference type="InterPro" id="IPR004167">
    <property type="entry name" value="PSBD"/>
</dbReference>
<dbReference type="InterPro" id="IPR011053">
    <property type="entry name" value="Single_hybrid_motif"/>
</dbReference>
<dbReference type="PANTHER" id="PTHR43178">
    <property type="entry name" value="DIHYDROLIPOAMIDE ACETYLTRANSFERASE COMPONENT OF PYRUVATE DEHYDROGENASE COMPLEX"/>
    <property type="match status" value="1"/>
</dbReference>
<dbReference type="PANTHER" id="PTHR43178:SF5">
    <property type="entry name" value="LIPOAMIDE ACYLTRANSFERASE COMPONENT OF BRANCHED-CHAIN ALPHA-KETO ACID DEHYDROGENASE COMPLEX, MITOCHONDRIAL"/>
    <property type="match status" value="1"/>
</dbReference>
<dbReference type="Pfam" id="PF00198">
    <property type="entry name" value="2-oxoacid_dh"/>
    <property type="match status" value="1"/>
</dbReference>
<dbReference type="Pfam" id="PF00364">
    <property type="entry name" value="Biotin_lipoyl"/>
    <property type="match status" value="1"/>
</dbReference>
<dbReference type="Pfam" id="PF02817">
    <property type="entry name" value="E3_binding"/>
    <property type="match status" value="1"/>
</dbReference>
<dbReference type="SUPFAM" id="SSF52777">
    <property type="entry name" value="CoA-dependent acyltransferases"/>
    <property type="match status" value="1"/>
</dbReference>
<dbReference type="SUPFAM" id="SSF47005">
    <property type="entry name" value="Peripheral subunit-binding domain of 2-oxo acid dehydrogenase complex"/>
    <property type="match status" value="1"/>
</dbReference>
<dbReference type="SUPFAM" id="SSF51230">
    <property type="entry name" value="Single hybrid motif"/>
    <property type="match status" value="1"/>
</dbReference>
<dbReference type="PROSITE" id="PS50968">
    <property type="entry name" value="BIOTINYL_LIPOYL"/>
    <property type="match status" value="1"/>
</dbReference>
<dbReference type="PROSITE" id="PS00189">
    <property type="entry name" value="LIPOYL"/>
    <property type="match status" value="1"/>
</dbReference>
<dbReference type="PROSITE" id="PS51826">
    <property type="entry name" value="PSBD"/>
    <property type="match status" value="1"/>
</dbReference>